<keyword id="KW-0067">ATP-binding</keyword>
<keyword id="KW-0173">Coenzyme A biosynthesis</keyword>
<keyword id="KW-0963">Cytoplasm</keyword>
<keyword id="KW-0547">Nucleotide-binding</keyword>
<keyword id="KW-0548">Nucleotidyltransferase</keyword>
<keyword id="KW-1185">Reference proteome</keyword>
<keyword id="KW-0808">Transferase</keyword>
<name>COAD_THEKO</name>
<dbReference type="EC" id="2.7.7.3" evidence="1"/>
<dbReference type="EMBL" id="AP006878">
    <property type="protein sequence ID" value="BAD86317.1"/>
    <property type="molecule type" value="Genomic_DNA"/>
</dbReference>
<dbReference type="RefSeq" id="WP_011251078.1">
    <property type="nucleotide sequence ID" value="NC_006624.1"/>
</dbReference>
<dbReference type="SMR" id="Q5JHE8"/>
<dbReference type="FunCoup" id="Q5JHE8">
    <property type="interactions" value="63"/>
</dbReference>
<dbReference type="STRING" id="69014.TK2128"/>
<dbReference type="EnsemblBacteria" id="BAD86317">
    <property type="protein sequence ID" value="BAD86317"/>
    <property type="gene ID" value="TK2128"/>
</dbReference>
<dbReference type="GeneID" id="78448663"/>
<dbReference type="KEGG" id="tko:TK2128"/>
<dbReference type="PATRIC" id="fig|69014.16.peg.2084"/>
<dbReference type="eggNOG" id="arCOG01223">
    <property type="taxonomic scope" value="Archaea"/>
</dbReference>
<dbReference type="HOGENOM" id="CLU_035272_5_0_2"/>
<dbReference type="InParanoid" id="Q5JHE8"/>
<dbReference type="OrthoDB" id="53228at2157"/>
<dbReference type="PhylomeDB" id="Q5JHE8"/>
<dbReference type="UniPathway" id="UPA00241"/>
<dbReference type="Proteomes" id="UP000000536">
    <property type="component" value="Chromosome"/>
</dbReference>
<dbReference type="GO" id="GO:0005737">
    <property type="term" value="C:cytoplasm"/>
    <property type="evidence" value="ECO:0007669"/>
    <property type="project" value="UniProtKB-SubCell"/>
</dbReference>
<dbReference type="GO" id="GO:0005524">
    <property type="term" value="F:ATP binding"/>
    <property type="evidence" value="ECO:0007669"/>
    <property type="project" value="UniProtKB-KW"/>
</dbReference>
<dbReference type="GO" id="GO:0004140">
    <property type="term" value="F:dephospho-CoA kinase activity"/>
    <property type="evidence" value="ECO:0000318"/>
    <property type="project" value="GO_Central"/>
</dbReference>
<dbReference type="GO" id="GO:0004595">
    <property type="term" value="F:pantetheine-phosphate adenylyltransferase activity"/>
    <property type="evidence" value="ECO:0007669"/>
    <property type="project" value="UniProtKB-UniRule"/>
</dbReference>
<dbReference type="GO" id="GO:0015937">
    <property type="term" value="P:coenzyme A biosynthetic process"/>
    <property type="evidence" value="ECO:0000318"/>
    <property type="project" value="GO_Central"/>
</dbReference>
<dbReference type="CDD" id="cd02164">
    <property type="entry name" value="PPAT_CoAS"/>
    <property type="match status" value="1"/>
</dbReference>
<dbReference type="Gene3D" id="3.40.50.620">
    <property type="entry name" value="HUPs"/>
    <property type="match status" value="1"/>
</dbReference>
<dbReference type="HAMAP" id="MF_00647">
    <property type="entry name" value="PPAT_arch"/>
    <property type="match status" value="1"/>
</dbReference>
<dbReference type="InterPro" id="IPR054937">
    <property type="entry name" value="CoaD_Thcocales"/>
</dbReference>
<dbReference type="InterPro" id="IPR004821">
    <property type="entry name" value="Cyt_trans-like"/>
</dbReference>
<dbReference type="InterPro" id="IPR023540">
    <property type="entry name" value="PPAT_arch"/>
</dbReference>
<dbReference type="InterPro" id="IPR014729">
    <property type="entry name" value="Rossmann-like_a/b/a_fold"/>
</dbReference>
<dbReference type="NCBIfam" id="NF041124">
    <property type="entry name" value="CoaD_Thcocales"/>
    <property type="match status" value="1"/>
</dbReference>
<dbReference type="NCBIfam" id="TIGR00125">
    <property type="entry name" value="cyt_tran_rel"/>
    <property type="match status" value="1"/>
</dbReference>
<dbReference type="NCBIfam" id="NF001985">
    <property type="entry name" value="PRK00777.1"/>
    <property type="match status" value="1"/>
</dbReference>
<dbReference type="PANTHER" id="PTHR10695:SF46">
    <property type="entry name" value="BIFUNCTIONAL COENZYME A SYNTHASE-RELATED"/>
    <property type="match status" value="1"/>
</dbReference>
<dbReference type="PANTHER" id="PTHR10695">
    <property type="entry name" value="DEPHOSPHO-COA KINASE-RELATED"/>
    <property type="match status" value="1"/>
</dbReference>
<dbReference type="Pfam" id="PF01467">
    <property type="entry name" value="CTP_transf_like"/>
    <property type="match status" value="1"/>
</dbReference>
<dbReference type="SUPFAM" id="SSF52374">
    <property type="entry name" value="Nucleotidylyl transferase"/>
    <property type="match status" value="1"/>
</dbReference>
<accession>Q5JHE8</accession>
<gene>
    <name evidence="1" type="primary">coaD</name>
    <name type="ordered locus">TK2128</name>
</gene>
<organism>
    <name type="scientific">Thermococcus kodakarensis (strain ATCC BAA-918 / JCM 12380 / KOD1)</name>
    <name type="common">Pyrococcus kodakaraensis (strain KOD1)</name>
    <dbReference type="NCBI Taxonomy" id="69014"/>
    <lineage>
        <taxon>Archaea</taxon>
        <taxon>Methanobacteriati</taxon>
        <taxon>Methanobacteriota</taxon>
        <taxon>Thermococci</taxon>
        <taxon>Thermococcales</taxon>
        <taxon>Thermococcaceae</taxon>
        <taxon>Thermococcus</taxon>
    </lineage>
</organism>
<proteinExistence type="inferred from homology"/>
<reference key="1">
    <citation type="journal article" date="2005" name="Genome Res.">
        <title>Complete genome sequence of the hyperthermophilic archaeon Thermococcus kodakaraensis KOD1 and comparison with Pyrococcus genomes.</title>
        <authorList>
            <person name="Fukui T."/>
            <person name="Atomi H."/>
            <person name="Kanai T."/>
            <person name="Matsumi R."/>
            <person name="Fujiwara S."/>
            <person name="Imanaka T."/>
        </authorList>
    </citation>
    <scope>NUCLEOTIDE SEQUENCE [LARGE SCALE GENOMIC DNA]</scope>
    <source>
        <strain>ATCC BAA-918 / JCM 12380 / KOD1</strain>
    </source>
</reference>
<reference key="2">
    <citation type="journal article" date="2019" name="MBio">
        <title>Identification of dephospho-coenzyme A (dephospho-CoA) kinase in Thermococcus kodakarensis and elucidation of the entire CoA biosynthesis pathway in archaea.</title>
        <authorList>
            <person name="Shimosaka T."/>
            <person name="Makarova K.S."/>
            <person name="Koonin E.V."/>
            <person name="Atomi H."/>
        </authorList>
    </citation>
    <scope>PATHWAY</scope>
    <scope>DISRUPTION PHENOTYPE</scope>
    <source>
        <strain>ATCC BAA-918 / JCM 12380 / KOD1</strain>
    </source>
</reference>
<feature type="chain" id="PRO_0000156328" description="Phosphopantetheine adenylyltransferase">
    <location>
        <begin position="1"/>
        <end position="165"/>
    </location>
</feature>
<sequence length="165" mass="18777">MRKKYRKVVVGGTFDRLHLGHKALLRKAFEVGKIVYIGLTSDEMVRNKPYAERILPYEHRLKDLLKFIEVNGYTNYRIIKIHTAIGFADSMKSLEAIVVSEETYKGALIVNRAREEKGLKPLDIVTIPIIKSYLGDKISSSLIRAGLIDPFGRPLHWKGNSPKDV</sequence>
<comment type="function">
    <text evidence="1">Reversibly transfers an adenylyl group from ATP to 4'-phosphopantetheine, yielding dephospho-CoA (dPCoA) and pyrophosphate.</text>
</comment>
<comment type="catalytic activity">
    <reaction evidence="1">
        <text>(R)-4'-phosphopantetheine + ATP + H(+) = 3'-dephospho-CoA + diphosphate</text>
        <dbReference type="Rhea" id="RHEA:19801"/>
        <dbReference type="ChEBI" id="CHEBI:15378"/>
        <dbReference type="ChEBI" id="CHEBI:30616"/>
        <dbReference type="ChEBI" id="CHEBI:33019"/>
        <dbReference type="ChEBI" id="CHEBI:57328"/>
        <dbReference type="ChEBI" id="CHEBI:61723"/>
        <dbReference type="EC" id="2.7.7.3"/>
    </reaction>
</comment>
<comment type="pathway">
    <text evidence="1 2">Cofactor biosynthesis; coenzyme A biosynthesis.</text>
</comment>
<comment type="subcellular location">
    <subcellularLocation>
        <location evidence="1">Cytoplasm</location>
    </subcellularLocation>
</comment>
<comment type="disruption phenotype">
    <text evidence="2">Disruption of the gene results in CoA auxotrophy.</text>
</comment>
<comment type="similarity">
    <text evidence="1">Belongs to the eukaryotic CoaD family.</text>
</comment>
<evidence type="ECO:0000255" key="1">
    <source>
        <dbReference type="HAMAP-Rule" id="MF_00647"/>
    </source>
</evidence>
<evidence type="ECO:0000269" key="2">
    <source>
    </source>
</evidence>
<evidence type="ECO:0000303" key="3">
    <source>
    </source>
</evidence>
<protein>
    <recommendedName>
        <fullName evidence="1 3">Phosphopantetheine adenylyltransferase</fullName>
        <ecNumber evidence="1">2.7.7.3</ecNumber>
    </recommendedName>
    <alternativeName>
        <fullName evidence="1">Dephospho-CoA pyrophosphorylase</fullName>
    </alternativeName>
    <alternativeName>
        <fullName evidence="1">Pantetheine-phosphate adenylyltransferase</fullName>
        <shortName evidence="1 3">PPAT</shortName>
    </alternativeName>
</protein>